<gene>
    <name evidence="1" type="primary">dapF</name>
    <name type="ordered locus">Mpop_2842</name>
</gene>
<accession>B1ZDT1</accession>
<protein>
    <recommendedName>
        <fullName evidence="1">Diaminopimelate epimerase</fullName>
        <shortName evidence="1">DAP epimerase</shortName>
        <ecNumber evidence="1">5.1.1.7</ecNumber>
    </recommendedName>
    <alternativeName>
        <fullName evidence="1">PLP-independent amino acid racemase</fullName>
    </alternativeName>
</protein>
<evidence type="ECO:0000255" key="1">
    <source>
        <dbReference type="HAMAP-Rule" id="MF_00197"/>
    </source>
</evidence>
<dbReference type="EC" id="5.1.1.7" evidence="1"/>
<dbReference type="EMBL" id="CP001029">
    <property type="protein sequence ID" value="ACB80997.1"/>
    <property type="molecule type" value="Genomic_DNA"/>
</dbReference>
<dbReference type="RefSeq" id="WP_012454719.1">
    <property type="nucleotide sequence ID" value="NC_010725.1"/>
</dbReference>
<dbReference type="SMR" id="B1ZDT1"/>
<dbReference type="STRING" id="441620.Mpop_2842"/>
<dbReference type="KEGG" id="mpo:Mpop_2842"/>
<dbReference type="eggNOG" id="COG0253">
    <property type="taxonomic scope" value="Bacteria"/>
</dbReference>
<dbReference type="HOGENOM" id="CLU_053306_1_0_5"/>
<dbReference type="OrthoDB" id="9805408at2"/>
<dbReference type="UniPathway" id="UPA00034">
    <property type="reaction ID" value="UER00025"/>
</dbReference>
<dbReference type="Proteomes" id="UP000007136">
    <property type="component" value="Chromosome"/>
</dbReference>
<dbReference type="GO" id="GO:0005829">
    <property type="term" value="C:cytosol"/>
    <property type="evidence" value="ECO:0007669"/>
    <property type="project" value="TreeGrafter"/>
</dbReference>
<dbReference type="GO" id="GO:0008837">
    <property type="term" value="F:diaminopimelate epimerase activity"/>
    <property type="evidence" value="ECO:0007669"/>
    <property type="project" value="UniProtKB-UniRule"/>
</dbReference>
<dbReference type="GO" id="GO:0009089">
    <property type="term" value="P:lysine biosynthetic process via diaminopimelate"/>
    <property type="evidence" value="ECO:0007669"/>
    <property type="project" value="UniProtKB-UniRule"/>
</dbReference>
<dbReference type="Gene3D" id="3.10.310.10">
    <property type="entry name" value="Diaminopimelate Epimerase, Chain A, domain 1"/>
    <property type="match status" value="2"/>
</dbReference>
<dbReference type="HAMAP" id="MF_00197">
    <property type="entry name" value="DAP_epimerase"/>
    <property type="match status" value="1"/>
</dbReference>
<dbReference type="InterPro" id="IPR018510">
    <property type="entry name" value="DAP_epimerase_AS"/>
</dbReference>
<dbReference type="InterPro" id="IPR001653">
    <property type="entry name" value="DAP_epimerase_DapF"/>
</dbReference>
<dbReference type="NCBIfam" id="TIGR00652">
    <property type="entry name" value="DapF"/>
    <property type="match status" value="1"/>
</dbReference>
<dbReference type="PANTHER" id="PTHR31689:SF0">
    <property type="entry name" value="DIAMINOPIMELATE EPIMERASE"/>
    <property type="match status" value="1"/>
</dbReference>
<dbReference type="PANTHER" id="PTHR31689">
    <property type="entry name" value="DIAMINOPIMELATE EPIMERASE, CHLOROPLASTIC"/>
    <property type="match status" value="1"/>
</dbReference>
<dbReference type="Pfam" id="PF01678">
    <property type="entry name" value="DAP_epimerase"/>
    <property type="match status" value="2"/>
</dbReference>
<dbReference type="SUPFAM" id="SSF54506">
    <property type="entry name" value="Diaminopimelate epimerase-like"/>
    <property type="match status" value="2"/>
</dbReference>
<dbReference type="PROSITE" id="PS01326">
    <property type="entry name" value="DAP_EPIMERASE"/>
    <property type="match status" value="1"/>
</dbReference>
<organism>
    <name type="scientific">Methylorubrum populi (strain ATCC BAA-705 / NCIMB 13946 / BJ001)</name>
    <name type="common">Methylobacterium populi</name>
    <dbReference type="NCBI Taxonomy" id="441620"/>
    <lineage>
        <taxon>Bacteria</taxon>
        <taxon>Pseudomonadati</taxon>
        <taxon>Pseudomonadota</taxon>
        <taxon>Alphaproteobacteria</taxon>
        <taxon>Hyphomicrobiales</taxon>
        <taxon>Methylobacteriaceae</taxon>
        <taxon>Methylorubrum</taxon>
    </lineage>
</organism>
<reference key="1">
    <citation type="submission" date="2008-04" db="EMBL/GenBank/DDBJ databases">
        <title>Complete sequence of chromosome of Methylobacterium populi BJ001.</title>
        <authorList>
            <consortium name="US DOE Joint Genome Institute"/>
            <person name="Copeland A."/>
            <person name="Lucas S."/>
            <person name="Lapidus A."/>
            <person name="Glavina del Rio T."/>
            <person name="Dalin E."/>
            <person name="Tice H."/>
            <person name="Bruce D."/>
            <person name="Goodwin L."/>
            <person name="Pitluck S."/>
            <person name="Chertkov O."/>
            <person name="Brettin T."/>
            <person name="Detter J.C."/>
            <person name="Han C."/>
            <person name="Kuske C.R."/>
            <person name="Schmutz J."/>
            <person name="Larimer F."/>
            <person name="Land M."/>
            <person name="Hauser L."/>
            <person name="Kyrpides N."/>
            <person name="Mikhailova N."/>
            <person name="Marx C."/>
            <person name="Richardson P."/>
        </authorList>
    </citation>
    <scope>NUCLEOTIDE SEQUENCE [LARGE SCALE GENOMIC DNA]</scope>
    <source>
        <strain>ATCC BAA-705 / NCIMB 13946 / BJ001</strain>
    </source>
</reference>
<comment type="function">
    <text evidence="1">Catalyzes the stereoinversion of LL-2,6-diaminopimelate (L,L-DAP) to meso-diaminopimelate (meso-DAP), a precursor of L-lysine and an essential component of the bacterial peptidoglycan.</text>
</comment>
<comment type="catalytic activity">
    <reaction evidence="1">
        <text>(2S,6S)-2,6-diaminopimelate = meso-2,6-diaminopimelate</text>
        <dbReference type="Rhea" id="RHEA:15393"/>
        <dbReference type="ChEBI" id="CHEBI:57609"/>
        <dbReference type="ChEBI" id="CHEBI:57791"/>
        <dbReference type="EC" id="5.1.1.7"/>
    </reaction>
</comment>
<comment type="pathway">
    <text evidence="1">Amino-acid biosynthesis; L-lysine biosynthesis via DAP pathway; DL-2,6-diaminopimelate from LL-2,6-diaminopimelate: step 1/1.</text>
</comment>
<comment type="subunit">
    <text evidence="1">Homodimer.</text>
</comment>
<comment type="subcellular location">
    <subcellularLocation>
        <location evidence="1">Cytoplasm</location>
    </subcellularLocation>
</comment>
<comment type="similarity">
    <text evidence="1">Belongs to the diaminopimelate epimerase family.</text>
</comment>
<feature type="chain" id="PRO_1000099246" description="Diaminopimelate epimerase">
    <location>
        <begin position="1"/>
        <end position="296"/>
    </location>
</feature>
<feature type="active site" description="Proton donor" evidence="1">
    <location>
        <position position="78"/>
    </location>
</feature>
<feature type="active site" description="Proton acceptor" evidence="1">
    <location>
        <position position="232"/>
    </location>
</feature>
<feature type="binding site" evidence="1">
    <location>
        <position position="17"/>
    </location>
    <ligand>
        <name>substrate</name>
    </ligand>
</feature>
<feature type="binding site" evidence="1">
    <location>
        <position position="49"/>
    </location>
    <ligand>
        <name>substrate</name>
    </ligand>
</feature>
<feature type="binding site" evidence="1">
    <location>
        <position position="69"/>
    </location>
    <ligand>
        <name>substrate</name>
    </ligand>
</feature>
<feature type="binding site" evidence="1">
    <location>
        <begin position="79"/>
        <end position="80"/>
    </location>
    <ligand>
        <name>substrate</name>
    </ligand>
</feature>
<feature type="binding site" evidence="1">
    <location>
        <position position="171"/>
    </location>
    <ligand>
        <name>substrate</name>
    </ligand>
</feature>
<feature type="binding site" evidence="1">
    <location>
        <position position="205"/>
    </location>
    <ligand>
        <name>substrate</name>
    </ligand>
</feature>
<feature type="binding site" evidence="1">
    <location>
        <begin position="223"/>
        <end position="224"/>
    </location>
    <ligand>
        <name>substrate</name>
    </ligand>
</feature>
<feature type="binding site" evidence="1">
    <location>
        <begin position="233"/>
        <end position="234"/>
    </location>
    <ligand>
        <name>substrate</name>
    </ligand>
</feature>
<feature type="site" description="Could be important to modulate the pK values of the two catalytic cysteine residues" evidence="1">
    <location>
        <position position="173"/>
    </location>
</feature>
<feature type="site" description="Could be important to modulate the pK values of the two catalytic cysteine residues" evidence="1">
    <location>
        <position position="223"/>
    </location>
</feature>
<proteinExistence type="inferred from homology"/>
<name>DAPF_METPB</name>
<sequence length="296" mass="31724">MSPLANRRFLKMHGAGNAIVVLDLRGTSIRVAPAEARAIAADAHSRFDQLMVVHDPVTPGTDAFMRIYNTDGSESGACGNGTRCVGYALLDDPAMARPAENGCLTLETKAGLVAVKRVTDRSFTVDMGQPRLRWDEIPLAEPFPDTRRIELQVGPIDDPILHSPAAVSMGNPHAIFFVERDPDTFDLGRIGPLLEAHPIFPERANISIAQVTSRDTIKLRVWERGAGLTLACGTAACATVVAAARLRMIGRAARVALPGGELSIEWRADDHVLMTGPVFLEGEGSLSPDLFAGLDG</sequence>
<keyword id="KW-0028">Amino-acid biosynthesis</keyword>
<keyword id="KW-0963">Cytoplasm</keyword>
<keyword id="KW-0413">Isomerase</keyword>
<keyword id="KW-0457">Lysine biosynthesis</keyword>